<evidence type="ECO:0000255" key="1"/>
<evidence type="ECO:0000269" key="2">
    <source>
    </source>
</evidence>
<evidence type="ECO:0000303" key="3">
    <source>
    </source>
</evidence>
<evidence type="ECO:0000305" key="4"/>
<protein>
    <recommendedName>
        <fullName evidence="3">N-acetylmuramyl-L-alanine amidase</fullName>
        <ecNumber evidence="2">3.5.1.28</ecNumber>
    </recommendedName>
</protein>
<accession>O05213</accession>
<accession>O08069</accession>
<accession>Q45578</accession>
<reference key="1">
    <citation type="journal article" date="1997" name="Microbiology">
        <title>Sequence and analysis of a 31 kb segment of the Bacillus subtilis chromosome in the area of the rrnH and rrnG operons.</title>
        <authorList>
            <person name="Liu H."/>
            <person name="Haga K."/>
            <person name="Yasumoto K."/>
            <person name="Ohashi Y."/>
            <person name="Yoshikawa H."/>
            <person name="Takahashi H."/>
        </authorList>
    </citation>
    <scope>NUCLEOTIDE SEQUENCE [GENOMIC DNA]</scope>
    <source>
        <strain>168</strain>
    </source>
</reference>
<reference key="2">
    <citation type="journal article" date="1997" name="Nature">
        <title>The complete genome sequence of the Gram-positive bacterium Bacillus subtilis.</title>
        <authorList>
            <person name="Kunst F."/>
            <person name="Ogasawara N."/>
            <person name="Moszer I."/>
            <person name="Albertini A.M."/>
            <person name="Alloni G."/>
            <person name="Azevedo V."/>
            <person name="Bertero M.G."/>
            <person name="Bessieres P."/>
            <person name="Bolotin A."/>
            <person name="Borchert S."/>
            <person name="Borriss R."/>
            <person name="Boursier L."/>
            <person name="Brans A."/>
            <person name="Braun M."/>
            <person name="Brignell S.C."/>
            <person name="Bron S."/>
            <person name="Brouillet S."/>
            <person name="Bruschi C.V."/>
            <person name="Caldwell B."/>
            <person name="Capuano V."/>
            <person name="Carter N.M."/>
            <person name="Choi S.-K."/>
            <person name="Codani J.-J."/>
            <person name="Connerton I.F."/>
            <person name="Cummings N.J."/>
            <person name="Daniel R.A."/>
            <person name="Denizot F."/>
            <person name="Devine K.M."/>
            <person name="Duesterhoeft A."/>
            <person name="Ehrlich S.D."/>
            <person name="Emmerson P.T."/>
            <person name="Entian K.-D."/>
            <person name="Errington J."/>
            <person name="Fabret C."/>
            <person name="Ferrari E."/>
            <person name="Foulger D."/>
            <person name="Fritz C."/>
            <person name="Fujita M."/>
            <person name="Fujita Y."/>
            <person name="Fuma S."/>
            <person name="Galizzi A."/>
            <person name="Galleron N."/>
            <person name="Ghim S.-Y."/>
            <person name="Glaser P."/>
            <person name="Goffeau A."/>
            <person name="Golightly E.J."/>
            <person name="Grandi G."/>
            <person name="Guiseppi G."/>
            <person name="Guy B.J."/>
            <person name="Haga K."/>
            <person name="Haiech J."/>
            <person name="Harwood C.R."/>
            <person name="Henaut A."/>
            <person name="Hilbert H."/>
            <person name="Holsappel S."/>
            <person name="Hosono S."/>
            <person name="Hullo M.-F."/>
            <person name="Itaya M."/>
            <person name="Jones L.-M."/>
            <person name="Joris B."/>
            <person name="Karamata D."/>
            <person name="Kasahara Y."/>
            <person name="Klaerr-Blanchard M."/>
            <person name="Klein C."/>
            <person name="Kobayashi Y."/>
            <person name="Koetter P."/>
            <person name="Koningstein G."/>
            <person name="Krogh S."/>
            <person name="Kumano M."/>
            <person name="Kurita K."/>
            <person name="Lapidus A."/>
            <person name="Lardinois S."/>
            <person name="Lauber J."/>
            <person name="Lazarevic V."/>
            <person name="Lee S.-M."/>
            <person name="Levine A."/>
            <person name="Liu H."/>
            <person name="Masuda S."/>
            <person name="Mauel C."/>
            <person name="Medigue C."/>
            <person name="Medina N."/>
            <person name="Mellado R.P."/>
            <person name="Mizuno M."/>
            <person name="Moestl D."/>
            <person name="Nakai S."/>
            <person name="Noback M."/>
            <person name="Noone D."/>
            <person name="O'Reilly M."/>
            <person name="Ogawa K."/>
            <person name="Ogiwara A."/>
            <person name="Oudega B."/>
            <person name="Park S.-H."/>
            <person name="Parro V."/>
            <person name="Pohl T.M."/>
            <person name="Portetelle D."/>
            <person name="Porwollik S."/>
            <person name="Prescott A.M."/>
            <person name="Presecan E."/>
            <person name="Pujic P."/>
            <person name="Purnelle B."/>
            <person name="Rapoport G."/>
            <person name="Rey M."/>
            <person name="Reynolds S."/>
            <person name="Rieger M."/>
            <person name="Rivolta C."/>
            <person name="Rocha E."/>
            <person name="Roche B."/>
            <person name="Rose M."/>
            <person name="Sadaie Y."/>
            <person name="Sato T."/>
            <person name="Scanlan E."/>
            <person name="Schleich S."/>
            <person name="Schroeter R."/>
            <person name="Scoffone F."/>
            <person name="Sekiguchi J."/>
            <person name="Sekowska A."/>
            <person name="Seror S.J."/>
            <person name="Serror P."/>
            <person name="Shin B.-S."/>
            <person name="Soldo B."/>
            <person name="Sorokin A."/>
            <person name="Tacconi E."/>
            <person name="Takagi T."/>
            <person name="Takahashi H."/>
            <person name="Takemaru K."/>
            <person name="Takeuchi M."/>
            <person name="Tamakoshi A."/>
            <person name="Tanaka T."/>
            <person name="Terpstra P."/>
            <person name="Tognoni A."/>
            <person name="Tosato V."/>
            <person name="Uchiyama S."/>
            <person name="Vandenbol M."/>
            <person name="Vannier F."/>
            <person name="Vassarotti A."/>
            <person name="Viari A."/>
            <person name="Wambutt R."/>
            <person name="Wedler E."/>
            <person name="Wedler H."/>
            <person name="Weitzenegger T."/>
            <person name="Winters P."/>
            <person name="Wipat A."/>
            <person name="Yamamoto H."/>
            <person name="Yamane K."/>
            <person name="Yasumoto K."/>
            <person name="Yata K."/>
            <person name="Yoshida K."/>
            <person name="Yoshikawa H.-F."/>
            <person name="Zumstein E."/>
            <person name="Yoshikawa H."/>
            <person name="Danchin A."/>
        </authorList>
    </citation>
    <scope>NUCLEOTIDE SEQUENCE [LARGE SCALE GENOMIC DNA]</scope>
    <source>
        <strain>168</strain>
    </source>
</reference>
<reference key="3">
    <citation type="journal article" date="2009" name="Microbiology">
        <title>From a consortium sequence to a unified sequence: the Bacillus subtilis 168 reference genome a decade later.</title>
        <authorList>
            <person name="Barbe V."/>
            <person name="Cruveiller S."/>
            <person name="Kunst F."/>
            <person name="Lenoble P."/>
            <person name="Meurice G."/>
            <person name="Sekowska A."/>
            <person name="Vallenet D."/>
            <person name="Wang T."/>
            <person name="Moszer I."/>
            <person name="Medigue C."/>
            <person name="Danchin A."/>
        </authorList>
    </citation>
    <scope>SEQUENCE REVISION TO 156-167</scope>
</reference>
<reference key="4">
    <citation type="journal article" date="2010" name="J. Bacteriol.">
        <title>Muropeptide rescue in Bacillus subtilis involves sequential hydrolysis by beta-N-acetylglucosaminidase and N-acetylmuramyl-L-alanine amidase.</title>
        <authorList>
            <person name="Litzinger S."/>
            <person name="Duckworth A."/>
            <person name="Nitzsche K."/>
            <person name="Risinger C."/>
            <person name="Wittmann V."/>
            <person name="Mayer C."/>
        </authorList>
    </citation>
    <scope>FUNCTION</scope>
    <scope>CATALYTIC ACTIVITY</scope>
    <scope>PATHWAY</scope>
    <source>
        <strain>168</strain>
    </source>
</reference>
<comment type="function">
    <text evidence="2">Involved in muropeptide recycling. Hydrolyzes the amide bond between N-acetylmuramic acid (MurNAc) and the L-alanine residue of the stem peptide. Cannot hydrolyze muropeptides containing N-acetylglucosamine (GlcNAc) at the non-reducing end.</text>
</comment>
<comment type="catalytic activity">
    <reaction evidence="2">
        <text>Hydrolyzes the link between N-acetylmuramoyl residues and L-amino acid residues in certain cell-wall glycopeptides.</text>
        <dbReference type="EC" id="3.5.1.28"/>
    </reaction>
</comment>
<comment type="pathway">
    <text evidence="2">Cell wall biogenesis; peptidoglycan recycling.</text>
</comment>
<comment type="similarity">
    <text evidence="4">Belongs to the peptidase S12 family.</text>
</comment>
<comment type="sequence caution" evidence="4">
    <conflict type="frameshift">
        <sequence resource="EMBL-CDS" id="BAA19500"/>
    </conflict>
</comment>
<comment type="sequence caution" evidence="4">
    <conflict type="erroneous initiation">
        <sequence resource="EMBL-CDS" id="BAA19501"/>
    </conflict>
    <text>Truncated N-terminus.</text>
</comment>
<comment type="sequence caution" evidence="4">
    <conflict type="frameshift">
        <sequence resource="EMBL-CDS" id="BAA19501"/>
    </conflict>
</comment>
<name>AMIE_BACSU</name>
<gene>
    <name evidence="3" type="primary">amiE</name>
    <name type="synonym">ybbE</name>
    <name type="ordered locus">BSU01670</name>
</gene>
<keyword id="KW-0961">Cell wall biogenesis/degradation</keyword>
<keyword id="KW-0378">Hydrolase</keyword>
<keyword id="KW-1185">Reference proteome</keyword>
<keyword id="KW-0732">Signal</keyword>
<proteinExistence type="evidence at protein level"/>
<feature type="signal peptide" evidence="1">
    <location>
        <begin position="1"/>
        <end position="25"/>
    </location>
</feature>
<feature type="chain" id="PRO_0000036260" description="N-acetylmuramyl-L-alanine amidase">
    <location>
        <begin position="26"/>
        <end position="441"/>
    </location>
</feature>
<feature type="sequence conflict" description="In Ref. 1; BAA19500/BAA19501." evidence="4" ref="1">
    <original>DKIRVIDVLQHQ</original>
    <variation>TRYVSLMSSSTN</variation>
    <location>
        <begin position="156"/>
        <end position="167"/>
    </location>
</feature>
<dbReference type="EC" id="3.5.1.28" evidence="2"/>
<dbReference type="EMBL" id="AB002150">
    <property type="protein sequence ID" value="BAA19500.1"/>
    <property type="status" value="ALT_FRAME"/>
    <property type="molecule type" value="Genomic_DNA"/>
</dbReference>
<dbReference type="EMBL" id="AB002150">
    <property type="protein sequence ID" value="BAA19501.1"/>
    <property type="status" value="ALT_FRAME"/>
    <property type="molecule type" value="Genomic_DNA"/>
</dbReference>
<dbReference type="EMBL" id="AL009126">
    <property type="protein sequence ID" value="CAB11943.2"/>
    <property type="molecule type" value="Genomic_DNA"/>
</dbReference>
<dbReference type="PIR" id="A69744">
    <property type="entry name" value="A69744"/>
</dbReference>
<dbReference type="RefSeq" id="NP_388048.2">
    <property type="nucleotide sequence ID" value="NC_000964.3"/>
</dbReference>
<dbReference type="RefSeq" id="WP_003234970.1">
    <property type="nucleotide sequence ID" value="NZ_OZ025638.1"/>
</dbReference>
<dbReference type="SMR" id="O05213"/>
<dbReference type="FunCoup" id="O05213">
    <property type="interactions" value="126"/>
</dbReference>
<dbReference type="STRING" id="224308.BSU01670"/>
<dbReference type="MEROPS" id="S12.952"/>
<dbReference type="PaxDb" id="224308-BSU01670"/>
<dbReference type="EnsemblBacteria" id="CAB11943">
    <property type="protein sequence ID" value="CAB11943"/>
    <property type="gene ID" value="BSU_01670"/>
</dbReference>
<dbReference type="GeneID" id="938886"/>
<dbReference type="KEGG" id="bsu:BSU01670"/>
<dbReference type="PATRIC" id="fig|224308.179.peg.173"/>
<dbReference type="eggNOG" id="COG1680">
    <property type="taxonomic scope" value="Bacteria"/>
</dbReference>
<dbReference type="InParanoid" id="O05213"/>
<dbReference type="OrthoDB" id="9770183at2"/>
<dbReference type="PhylomeDB" id="O05213"/>
<dbReference type="BioCyc" id="BSUB:BSU01670-MONOMER"/>
<dbReference type="UniPathway" id="UPA00544"/>
<dbReference type="Proteomes" id="UP000001570">
    <property type="component" value="Chromosome"/>
</dbReference>
<dbReference type="GO" id="GO:0008745">
    <property type="term" value="F:N-acetylmuramoyl-L-alanine amidase activity"/>
    <property type="evidence" value="ECO:0007669"/>
    <property type="project" value="UniProtKB-EC"/>
</dbReference>
<dbReference type="GO" id="GO:0071555">
    <property type="term" value="P:cell wall organization"/>
    <property type="evidence" value="ECO:0007669"/>
    <property type="project" value="UniProtKB-KW"/>
</dbReference>
<dbReference type="GO" id="GO:0009254">
    <property type="term" value="P:peptidoglycan turnover"/>
    <property type="evidence" value="ECO:0007669"/>
    <property type="project" value="UniProtKB-UniPathway"/>
</dbReference>
<dbReference type="Gene3D" id="3.40.710.10">
    <property type="entry name" value="DD-peptidase/beta-lactamase superfamily"/>
    <property type="match status" value="1"/>
</dbReference>
<dbReference type="InterPro" id="IPR001466">
    <property type="entry name" value="Beta-lactam-related"/>
</dbReference>
<dbReference type="InterPro" id="IPR012338">
    <property type="entry name" value="Beta-lactam/transpept-like"/>
</dbReference>
<dbReference type="InterPro" id="IPR050789">
    <property type="entry name" value="Diverse_Enzym_Activities"/>
</dbReference>
<dbReference type="NCBIfam" id="NF002968">
    <property type="entry name" value="PRK03642.1"/>
    <property type="match status" value="1"/>
</dbReference>
<dbReference type="PANTHER" id="PTHR43283">
    <property type="entry name" value="BETA-LACTAMASE-RELATED"/>
    <property type="match status" value="1"/>
</dbReference>
<dbReference type="PANTHER" id="PTHR43283:SF11">
    <property type="entry name" value="BETA-LACTAMASE-RELATED DOMAIN-CONTAINING PROTEIN"/>
    <property type="match status" value="1"/>
</dbReference>
<dbReference type="Pfam" id="PF00144">
    <property type="entry name" value="Beta-lactamase"/>
    <property type="match status" value="1"/>
</dbReference>
<dbReference type="SUPFAM" id="SSF56601">
    <property type="entry name" value="beta-lactamase/transpeptidase-like"/>
    <property type="match status" value="1"/>
</dbReference>
<organism>
    <name type="scientific">Bacillus subtilis (strain 168)</name>
    <dbReference type="NCBI Taxonomy" id="224308"/>
    <lineage>
        <taxon>Bacteria</taxon>
        <taxon>Bacillati</taxon>
        <taxon>Bacillota</taxon>
        <taxon>Bacilli</taxon>
        <taxon>Bacillales</taxon>
        <taxon>Bacillaceae</taxon>
        <taxon>Bacillus</taxon>
    </lineage>
</organism>
<sequence length="441" mass="49423">MKTKTLFIFSAILTLSIFAPNETFAQTAGNLIEPKIINAETAQFSTKKLRKVDQMIERDIAAGFPGAVLVVVKDGRIIKKAAYGYSKKYEGSELLRRPAKMKTRTMFDLASNTKMYATNFALQRLVSQGKLDVYEKVSAYLPGFKDQPGDLIKGKDKIRVIDVLQHQSGLPSSFYFYTPEKAGKYYSQERDKTIEYLTKIPLDYQTGTKHVYSDIGYMLLGCIVEKLTGKPLDVYTEQELYKPLRLKHTLYNPLQKGFKPKQFAATERMGNTRDGVIQFPNIRTNTLQGEVHDEKAFYSMDGVSGHAGLFSNADDMAILLQVMLNKGSYRNISLFDQKTADLFTAPSATDPTFALGWRRNGSKSMEWMFGPHASENAYGHTGWTGTVTIIDPAYNLGIALLTNKKHTPVIDPEENPNVFEGDQFPTGSYGSVITAIYEAME</sequence>